<organism>
    <name type="scientific">Coxiella burnetii (strain Dugway 5J108-111)</name>
    <dbReference type="NCBI Taxonomy" id="434922"/>
    <lineage>
        <taxon>Bacteria</taxon>
        <taxon>Pseudomonadati</taxon>
        <taxon>Pseudomonadota</taxon>
        <taxon>Gammaproteobacteria</taxon>
        <taxon>Legionellales</taxon>
        <taxon>Coxiellaceae</taxon>
        <taxon>Coxiella</taxon>
    </lineage>
</organism>
<keyword id="KW-0143">Chaperone</keyword>
<keyword id="KW-0963">Cytoplasm</keyword>
<keyword id="KW-0238">DNA-binding</keyword>
<comment type="function">
    <text evidence="1">DNA-binding protein that preferentially recognizes a curved DNA sequence. It is probably a functional analog of DnaJ; displays overlapping activities with DnaJ, but functions under different conditions, probably acting as a molecular chaperone in an adaptive response to environmental stresses other than heat shock. Lacks autonomous chaperone activity; binds native substrates and targets them for recognition by DnaK. Its activity is inhibited by the binding of CbpM.</text>
</comment>
<comment type="subcellular location">
    <subcellularLocation>
        <location evidence="1">Cytoplasm</location>
        <location evidence="1">Nucleoid</location>
    </subcellularLocation>
</comment>
<comment type="sequence caution" evidence="3">
    <conflict type="erroneous initiation">
        <sequence resource="EMBL-CDS" id="ABS77033"/>
    </conflict>
</comment>
<gene>
    <name evidence="1" type="primary">cbpA</name>
    <name type="ordered locus">CBUD_1223</name>
</gene>
<protein>
    <recommendedName>
        <fullName evidence="1">Curved DNA-binding protein</fullName>
    </recommendedName>
</protein>
<sequence length="313" mass="34935">MEYQDYYKILGVSRDATADEIKKSYRKLARKYHPDVSSEPNAEEKFKQVKEAYEVLKDVEKRKAYDAIGSGWKQGQGFTPPPGWESRPGGEGVRPEFREGFSDFFESLFGGLGQEARWTRQEFKQRGQDQHSRVTVSLEEAFNGSTRLLTLQEPIVDYQTGQVTSKTRQLRIKIPAGVTEGQQIRLQGQGLPGIGGAPNGDLYLEIHLAPHSLFTVEGKDVYLNLPVTPWEAALGAKVSIPTLGGSVDLTLPPGSQTGQKLRLKGRGLPGGTPGDQYVLIKIYIPEPKNDQQKELYQQMAEQMPFDPRKELLG</sequence>
<proteinExistence type="inferred from homology"/>
<reference key="1">
    <citation type="journal article" date="2009" name="Infect. Immun.">
        <title>Comparative genomics reveal extensive transposon-mediated genomic plasticity and diversity among potential effector proteins within the genus Coxiella.</title>
        <authorList>
            <person name="Beare P.A."/>
            <person name="Unsworth N."/>
            <person name="Andoh M."/>
            <person name="Voth D.E."/>
            <person name="Omsland A."/>
            <person name="Gilk S.D."/>
            <person name="Williams K.P."/>
            <person name="Sobral B.W."/>
            <person name="Kupko J.J. III"/>
            <person name="Porcella S.F."/>
            <person name="Samuel J.E."/>
            <person name="Heinzen R.A."/>
        </authorList>
    </citation>
    <scope>NUCLEOTIDE SEQUENCE [LARGE SCALE GENOMIC DNA]</scope>
    <source>
        <strain>Dugway 5J108-111</strain>
    </source>
</reference>
<evidence type="ECO:0000255" key="1">
    <source>
        <dbReference type="HAMAP-Rule" id="MF_01154"/>
    </source>
</evidence>
<evidence type="ECO:0000256" key="2">
    <source>
        <dbReference type="SAM" id="MobiDB-lite"/>
    </source>
</evidence>
<evidence type="ECO:0000305" key="3"/>
<accession>A9KE65</accession>
<name>CBPA_COXBN</name>
<dbReference type="EMBL" id="CP000733">
    <property type="protein sequence ID" value="ABS77033.2"/>
    <property type="status" value="ALT_INIT"/>
    <property type="molecule type" value="Genomic_DNA"/>
</dbReference>
<dbReference type="RefSeq" id="WP_012220518.1">
    <property type="nucleotide sequence ID" value="NC_009727.1"/>
</dbReference>
<dbReference type="SMR" id="A9KE65"/>
<dbReference type="KEGG" id="cbd:CBUD_1223"/>
<dbReference type="HOGENOM" id="CLU_017633_0_0_6"/>
<dbReference type="Proteomes" id="UP000008555">
    <property type="component" value="Chromosome"/>
</dbReference>
<dbReference type="GO" id="GO:0005737">
    <property type="term" value="C:cytoplasm"/>
    <property type="evidence" value="ECO:0007669"/>
    <property type="project" value="UniProtKB-UniRule"/>
</dbReference>
<dbReference type="GO" id="GO:0009295">
    <property type="term" value="C:nucleoid"/>
    <property type="evidence" value="ECO:0007669"/>
    <property type="project" value="UniProtKB-SubCell"/>
</dbReference>
<dbReference type="GO" id="GO:0003681">
    <property type="term" value="F:bent DNA binding"/>
    <property type="evidence" value="ECO:0007669"/>
    <property type="project" value="UniProtKB-UniRule"/>
</dbReference>
<dbReference type="GO" id="GO:0051082">
    <property type="term" value="F:unfolded protein binding"/>
    <property type="evidence" value="ECO:0007669"/>
    <property type="project" value="InterPro"/>
</dbReference>
<dbReference type="GO" id="GO:0051085">
    <property type="term" value="P:chaperone cofactor-dependent protein refolding"/>
    <property type="evidence" value="ECO:0007669"/>
    <property type="project" value="TreeGrafter"/>
</dbReference>
<dbReference type="GO" id="GO:0042026">
    <property type="term" value="P:protein refolding"/>
    <property type="evidence" value="ECO:0007669"/>
    <property type="project" value="TreeGrafter"/>
</dbReference>
<dbReference type="CDD" id="cd06257">
    <property type="entry name" value="DnaJ"/>
    <property type="match status" value="1"/>
</dbReference>
<dbReference type="CDD" id="cd10747">
    <property type="entry name" value="DnaJ_C"/>
    <property type="match status" value="1"/>
</dbReference>
<dbReference type="FunFam" id="1.10.287.110:FF:000135">
    <property type="entry name" value="Curved DNA binding protein"/>
    <property type="match status" value="1"/>
</dbReference>
<dbReference type="FunFam" id="2.60.260.20:FF:000008">
    <property type="entry name" value="Curved DNA-binding protein"/>
    <property type="match status" value="1"/>
</dbReference>
<dbReference type="FunFam" id="2.60.260.20:FF:000013">
    <property type="entry name" value="DnaJ subfamily B member 11"/>
    <property type="match status" value="1"/>
</dbReference>
<dbReference type="Gene3D" id="1.10.287.110">
    <property type="entry name" value="DnaJ domain"/>
    <property type="match status" value="1"/>
</dbReference>
<dbReference type="Gene3D" id="2.60.260.20">
    <property type="entry name" value="Urease metallochaperone UreE, N-terminal domain"/>
    <property type="match status" value="2"/>
</dbReference>
<dbReference type="HAMAP" id="MF_01154">
    <property type="entry name" value="CbpA"/>
    <property type="match status" value="1"/>
</dbReference>
<dbReference type="InterPro" id="IPR023859">
    <property type="entry name" value="DNA-bd_curved-DNA"/>
</dbReference>
<dbReference type="InterPro" id="IPR002939">
    <property type="entry name" value="DnaJ_C"/>
</dbReference>
<dbReference type="InterPro" id="IPR001623">
    <property type="entry name" value="DnaJ_domain"/>
</dbReference>
<dbReference type="InterPro" id="IPR018253">
    <property type="entry name" value="DnaJ_domain_CS"/>
</dbReference>
<dbReference type="InterPro" id="IPR008971">
    <property type="entry name" value="HSP40/DnaJ_pept-bd"/>
</dbReference>
<dbReference type="InterPro" id="IPR036869">
    <property type="entry name" value="J_dom_sf"/>
</dbReference>
<dbReference type="PANTHER" id="PTHR43096">
    <property type="entry name" value="DNAJ HOMOLOG 1, MITOCHONDRIAL-RELATED"/>
    <property type="match status" value="1"/>
</dbReference>
<dbReference type="PANTHER" id="PTHR43096:SF52">
    <property type="entry name" value="DNAJ HOMOLOG 1, MITOCHONDRIAL-RELATED"/>
    <property type="match status" value="1"/>
</dbReference>
<dbReference type="Pfam" id="PF00226">
    <property type="entry name" value="DnaJ"/>
    <property type="match status" value="1"/>
</dbReference>
<dbReference type="Pfam" id="PF01556">
    <property type="entry name" value="DnaJ_C"/>
    <property type="match status" value="1"/>
</dbReference>
<dbReference type="PRINTS" id="PR00625">
    <property type="entry name" value="JDOMAIN"/>
</dbReference>
<dbReference type="SMART" id="SM00271">
    <property type="entry name" value="DnaJ"/>
    <property type="match status" value="1"/>
</dbReference>
<dbReference type="SUPFAM" id="SSF46565">
    <property type="entry name" value="Chaperone J-domain"/>
    <property type="match status" value="1"/>
</dbReference>
<dbReference type="SUPFAM" id="SSF49493">
    <property type="entry name" value="HSP40/DnaJ peptide-binding domain"/>
    <property type="match status" value="2"/>
</dbReference>
<dbReference type="PROSITE" id="PS00636">
    <property type="entry name" value="DNAJ_1"/>
    <property type="match status" value="1"/>
</dbReference>
<dbReference type="PROSITE" id="PS50076">
    <property type="entry name" value="DNAJ_2"/>
    <property type="match status" value="1"/>
</dbReference>
<feature type="chain" id="PRO_1000085337" description="Curved DNA-binding protein">
    <location>
        <begin position="1"/>
        <end position="313"/>
    </location>
</feature>
<feature type="domain" description="J" evidence="1">
    <location>
        <begin position="5"/>
        <end position="69"/>
    </location>
</feature>
<feature type="region of interest" description="Disordered" evidence="2">
    <location>
        <begin position="71"/>
        <end position="93"/>
    </location>
</feature>